<dbReference type="EC" id="2.5.1.55" evidence="1"/>
<dbReference type="EMBL" id="CP000961">
    <property type="protein sequence ID" value="ACA87936.1"/>
    <property type="molecule type" value="Genomic_DNA"/>
</dbReference>
<dbReference type="RefSeq" id="WP_012326269.1">
    <property type="nucleotide sequence ID" value="NC_010506.1"/>
</dbReference>
<dbReference type="SMR" id="B1KDA1"/>
<dbReference type="STRING" id="392500.Swoo_3674"/>
<dbReference type="KEGG" id="swd:Swoo_3674"/>
<dbReference type="eggNOG" id="COG2877">
    <property type="taxonomic scope" value="Bacteria"/>
</dbReference>
<dbReference type="HOGENOM" id="CLU_036666_0_0_6"/>
<dbReference type="UniPathway" id="UPA00030"/>
<dbReference type="UniPathway" id="UPA00357">
    <property type="reaction ID" value="UER00474"/>
</dbReference>
<dbReference type="Proteomes" id="UP000002168">
    <property type="component" value="Chromosome"/>
</dbReference>
<dbReference type="GO" id="GO:0005737">
    <property type="term" value="C:cytoplasm"/>
    <property type="evidence" value="ECO:0007669"/>
    <property type="project" value="UniProtKB-SubCell"/>
</dbReference>
<dbReference type="GO" id="GO:0008676">
    <property type="term" value="F:3-deoxy-8-phosphooctulonate synthase activity"/>
    <property type="evidence" value="ECO:0007669"/>
    <property type="project" value="UniProtKB-UniRule"/>
</dbReference>
<dbReference type="GO" id="GO:0019294">
    <property type="term" value="P:keto-3-deoxy-D-manno-octulosonic acid biosynthetic process"/>
    <property type="evidence" value="ECO:0007669"/>
    <property type="project" value="UniProtKB-UniRule"/>
</dbReference>
<dbReference type="Gene3D" id="3.20.20.70">
    <property type="entry name" value="Aldolase class I"/>
    <property type="match status" value="1"/>
</dbReference>
<dbReference type="HAMAP" id="MF_00056">
    <property type="entry name" value="KDO8P_synth"/>
    <property type="match status" value="1"/>
</dbReference>
<dbReference type="InterPro" id="IPR013785">
    <property type="entry name" value="Aldolase_TIM"/>
</dbReference>
<dbReference type="InterPro" id="IPR006218">
    <property type="entry name" value="DAHP1/KDSA"/>
</dbReference>
<dbReference type="InterPro" id="IPR006269">
    <property type="entry name" value="KDO8P_synthase"/>
</dbReference>
<dbReference type="NCBIfam" id="TIGR01362">
    <property type="entry name" value="KDO8P_synth"/>
    <property type="match status" value="1"/>
</dbReference>
<dbReference type="NCBIfam" id="NF003543">
    <property type="entry name" value="PRK05198.1"/>
    <property type="match status" value="1"/>
</dbReference>
<dbReference type="NCBIfam" id="NF009109">
    <property type="entry name" value="PRK12457.1"/>
    <property type="match status" value="1"/>
</dbReference>
<dbReference type="PANTHER" id="PTHR21057">
    <property type="entry name" value="PHOSPHO-2-DEHYDRO-3-DEOXYHEPTONATE ALDOLASE"/>
    <property type="match status" value="1"/>
</dbReference>
<dbReference type="Pfam" id="PF00793">
    <property type="entry name" value="DAHP_synth_1"/>
    <property type="match status" value="1"/>
</dbReference>
<dbReference type="SUPFAM" id="SSF51569">
    <property type="entry name" value="Aldolase"/>
    <property type="match status" value="1"/>
</dbReference>
<keyword id="KW-0963">Cytoplasm</keyword>
<keyword id="KW-0448">Lipopolysaccharide biosynthesis</keyword>
<keyword id="KW-1185">Reference proteome</keyword>
<keyword id="KW-0808">Transferase</keyword>
<proteinExistence type="inferred from homology"/>
<organism>
    <name type="scientific">Shewanella woodyi (strain ATCC 51908 / MS32)</name>
    <dbReference type="NCBI Taxonomy" id="392500"/>
    <lineage>
        <taxon>Bacteria</taxon>
        <taxon>Pseudomonadati</taxon>
        <taxon>Pseudomonadota</taxon>
        <taxon>Gammaproteobacteria</taxon>
        <taxon>Alteromonadales</taxon>
        <taxon>Shewanellaceae</taxon>
        <taxon>Shewanella</taxon>
    </lineage>
</organism>
<accession>B1KDA1</accession>
<name>KDSA_SHEWM</name>
<comment type="catalytic activity">
    <reaction evidence="1">
        <text>D-arabinose 5-phosphate + phosphoenolpyruvate + H2O = 3-deoxy-alpha-D-manno-2-octulosonate-8-phosphate + phosphate</text>
        <dbReference type="Rhea" id="RHEA:14053"/>
        <dbReference type="ChEBI" id="CHEBI:15377"/>
        <dbReference type="ChEBI" id="CHEBI:43474"/>
        <dbReference type="ChEBI" id="CHEBI:57693"/>
        <dbReference type="ChEBI" id="CHEBI:58702"/>
        <dbReference type="ChEBI" id="CHEBI:85985"/>
        <dbReference type="EC" id="2.5.1.55"/>
    </reaction>
</comment>
<comment type="pathway">
    <text evidence="1">Carbohydrate biosynthesis; 3-deoxy-D-manno-octulosonate biosynthesis; 3-deoxy-D-manno-octulosonate from D-ribulose 5-phosphate: step 2/3.</text>
</comment>
<comment type="pathway">
    <text evidence="1">Bacterial outer membrane biogenesis; lipopolysaccharide biosynthesis.</text>
</comment>
<comment type="subcellular location">
    <subcellularLocation>
        <location evidence="1">Cytoplasm</location>
    </subcellularLocation>
</comment>
<comment type="similarity">
    <text evidence="1">Belongs to the KdsA family.</text>
</comment>
<reference key="1">
    <citation type="submission" date="2008-02" db="EMBL/GenBank/DDBJ databases">
        <title>Complete sequence of Shewanella woodyi ATCC 51908.</title>
        <authorList>
            <consortium name="US DOE Joint Genome Institute"/>
            <person name="Copeland A."/>
            <person name="Lucas S."/>
            <person name="Lapidus A."/>
            <person name="Glavina del Rio T."/>
            <person name="Dalin E."/>
            <person name="Tice H."/>
            <person name="Bruce D."/>
            <person name="Goodwin L."/>
            <person name="Pitluck S."/>
            <person name="Sims D."/>
            <person name="Brettin T."/>
            <person name="Detter J.C."/>
            <person name="Han C."/>
            <person name="Kuske C.R."/>
            <person name="Schmutz J."/>
            <person name="Larimer F."/>
            <person name="Land M."/>
            <person name="Hauser L."/>
            <person name="Kyrpides N."/>
            <person name="Lykidis A."/>
            <person name="Zhao J.-S."/>
            <person name="Richardson P."/>
        </authorList>
    </citation>
    <scope>NUCLEOTIDE SEQUENCE [LARGE SCALE GENOMIC DNA]</scope>
    <source>
        <strain>ATCC 51908 / MS32</strain>
    </source>
</reference>
<evidence type="ECO:0000255" key="1">
    <source>
        <dbReference type="HAMAP-Rule" id="MF_00056"/>
    </source>
</evidence>
<sequence>MSNKTIGLGSIEIANDKPFVLFGGMNVLESRDLAMKIAETYAETTQKLGIPYVFKASFDKANRSSVNSYRGPGMEEGLKIFEEIKSTFNLPLITDVHEIHQCAPVAEVVDIIQLPAFLARQTDLVVAMAKTGAIINVKKPQFLAPHEMRHIITKFNEAGNDEIILCERGSSFGYNNLVVDMLGMDEMKQTGYPVIFDATHALQRPGGRADSAGGRRAQATELARSGMALGLAGLFIEAHPDPDNAKCDGPCALPLHQLEAYLTQMKAVDDLVKSFDAIDTSK</sequence>
<feature type="chain" id="PRO_1000091837" description="2-dehydro-3-deoxyphosphooctonate aldolase">
    <location>
        <begin position="1"/>
        <end position="282"/>
    </location>
</feature>
<gene>
    <name evidence="1" type="primary">kdsA</name>
    <name type="ordered locus">Swoo_3674</name>
</gene>
<protein>
    <recommendedName>
        <fullName evidence="1">2-dehydro-3-deoxyphosphooctonate aldolase</fullName>
        <ecNumber evidence="1">2.5.1.55</ecNumber>
    </recommendedName>
    <alternativeName>
        <fullName evidence="1">3-deoxy-D-manno-octulosonic acid 8-phosphate synthase</fullName>
    </alternativeName>
    <alternativeName>
        <fullName evidence="1">KDO-8-phosphate synthase</fullName>
        <shortName evidence="1">KDO 8-P synthase</shortName>
        <shortName evidence="1">KDOPS</shortName>
    </alternativeName>
    <alternativeName>
        <fullName evidence="1">Phospho-2-dehydro-3-deoxyoctonate aldolase</fullName>
    </alternativeName>
</protein>